<name>LPXC_BURO1</name>
<evidence type="ECO:0000255" key="1">
    <source>
        <dbReference type="HAMAP-Rule" id="MF_00388"/>
    </source>
</evidence>
<reference key="1">
    <citation type="submission" date="2006-05" db="EMBL/GenBank/DDBJ databases">
        <title>Complete sequence of chromosome 1 of Burkholderia cenocepacia AU 1054.</title>
        <authorList>
            <consortium name="US DOE Joint Genome Institute"/>
            <person name="Copeland A."/>
            <person name="Lucas S."/>
            <person name="Lapidus A."/>
            <person name="Barry K."/>
            <person name="Detter J.C."/>
            <person name="Glavina del Rio T."/>
            <person name="Hammon N."/>
            <person name="Israni S."/>
            <person name="Dalin E."/>
            <person name="Tice H."/>
            <person name="Pitluck S."/>
            <person name="Chain P."/>
            <person name="Malfatti S."/>
            <person name="Shin M."/>
            <person name="Vergez L."/>
            <person name="Schmutz J."/>
            <person name="Larimer F."/>
            <person name="Land M."/>
            <person name="Hauser L."/>
            <person name="Kyrpides N."/>
            <person name="Lykidis A."/>
            <person name="LiPuma J.J."/>
            <person name="Konstantinidis K."/>
            <person name="Tiedje J.M."/>
            <person name="Richardson P."/>
        </authorList>
    </citation>
    <scope>NUCLEOTIDE SEQUENCE [LARGE SCALE GENOMIC DNA]</scope>
    <source>
        <strain>AU 1054</strain>
    </source>
</reference>
<feature type="chain" id="PRO_0000253650" description="UDP-3-O-acyl-N-acetylglucosamine deacetylase">
    <location>
        <begin position="1"/>
        <end position="305"/>
    </location>
</feature>
<feature type="active site" description="Proton donor" evidence="1">
    <location>
        <position position="264"/>
    </location>
</feature>
<feature type="binding site" evidence="1">
    <location>
        <position position="78"/>
    </location>
    <ligand>
        <name>Zn(2+)</name>
        <dbReference type="ChEBI" id="CHEBI:29105"/>
    </ligand>
</feature>
<feature type="binding site" evidence="1">
    <location>
        <position position="237"/>
    </location>
    <ligand>
        <name>Zn(2+)</name>
        <dbReference type="ChEBI" id="CHEBI:29105"/>
    </ligand>
</feature>
<feature type="binding site" evidence="1">
    <location>
        <position position="241"/>
    </location>
    <ligand>
        <name>Zn(2+)</name>
        <dbReference type="ChEBI" id="CHEBI:29105"/>
    </ligand>
</feature>
<proteinExistence type="inferred from homology"/>
<keyword id="KW-0378">Hydrolase</keyword>
<keyword id="KW-0441">Lipid A biosynthesis</keyword>
<keyword id="KW-0444">Lipid biosynthesis</keyword>
<keyword id="KW-0443">Lipid metabolism</keyword>
<keyword id="KW-0479">Metal-binding</keyword>
<keyword id="KW-0862">Zinc</keyword>
<organism>
    <name type="scientific">Burkholderia orbicola (strain AU 1054)</name>
    <dbReference type="NCBI Taxonomy" id="331271"/>
    <lineage>
        <taxon>Bacteria</taxon>
        <taxon>Pseudomonadati</taxon>
        <taxon>Pseudomonadota</taxon>
        <taxon>Betaproteobacteria</taxon>
        <taxon>Burkholderiales</taxon>
        <taxon>Burkholderiaceae</taxon>
        <taxon>Burkholderia</taxon>
        <taxon>Burkholderia cepacia complex</taxon>
        <taxon>Burkholderia orbicola</taxon>
    </lineage>
</organism>
<protein>
    <recommendedName>
        <fullName evidence="1">UDP-3-O-acyl-N-acetylglucosamine deacetylase</fullName>
        <shortName evidence="1">UDP-3-O-acyl-GlcNAc deacetylase</shortName>
        <ecNumber evidence="1">3.5.1.108</ecNumber>
    </recommendedName>
    <alternativeName>
        <fullName evidence="1">UDP-3-O-[R-3-hydroxymyristoyl]-N-acetylglucosamine deacetylase</fullName>
    </alternativeName>
</protein>
<sequence length="305" mass="33479">MLKQRTIKSIVKTVGIGVHSGRKIELTLRPAAPGTGIVFSRVDLPTPVDIPASAMSIGDTRLASVLQKDGVRVSTVEHLMSACAGLGIDNLYVDVTAEEIPIMDGSAATFVFLIQSAGIEEQNAPKRFIKVTKPVEIRDGDKFARLDPYFGFKLKFSIDFRHPAVDKTGQELEVDFATTSYVREIARARTFGFAHEAEMLREIGLARGGSMDNAIVLDEYRILNNDGLRYDDEFVKHKMLDAIGDLYVIGHPLLASYTAYKSGHGLNNALLRELLAHEDAYEIVTFDDPQAAPKGFAFDAQTAFA</sequence>
<gene>
    <name evidence="1" type="primary">lpxC</name>
    <name type="ordered locus">Bcen_0084</name>
</gene>
<dbReference type="EC" id="3.5.1.108" evidence="1"/>
<dbReference type="EMBL" id="CP000378">
    <property type="protein sequence ID" value="ABF74999.1"/>
    <property type="molecule type" value="Genomic_DNA"/>
</dbReference>
<dbReference type="SMR" id="Q1BZF6"/>
<dbReference type="HOGENOM" id="CLU_046528_1_0_4"/>
<dbReference type="UniPathway" id="UPA00359">
    <property type="reaction ID" value="UER00478"/>
</dbReference>
<dbReference type="GO" id="GO:0016020">
    <property type="term" value="C:membrane"/>
    <property type="evidence" value="ECO:0007669"/>
    <property type="project" value="GOC"/>
</dbReference>
<dbReference type="GO" id="GO:0046872">
    <property type="term" value="F:metal ion binding"/>
    <property type="evidence" value="ECO:0007669"/>
    <property type="project" value="UniProtKB-KW"/>
</dbReference>
<dbReference type="GO" id="GO:0103117">
    <property type="term" value="F:UDP-3-O-acyl-N-acetylglucosamine deacetylase activity"/>
    <property type="evidence" value="ECO:0007669"/>
    <property type="project" value="UniProtKB-UniRule"/>
</dbReference>
<dbReference type="GO" id="GO:0009245">
    <property type="term" value="P:lipid A biosynthetic process"/>
    <property type="evidence" value="ECO:0007669"/>
    <property type="project" value="UniProtKB-UniRule"/>
</dbReference>
<dbReference type="Gene3D" id="3.30.230.20">
    <property type="entry name" value="lpxc deacetylase, domain 1"/>
    <property type="match status" value="1"/>
</dbReference>
<dbReference type="Gene3D" id="3.30.1700.10">
    <property type="entry name" value="lpxc deacetylase, domain 2"/>
    <property type="match status" value="1"/>
</dbReference>
<dbReference type="HAMAP" id="MF_00388">
    <property type="entry name" value="LpxC"/>
    <property type="match status" value="1"/>
</dbReference>
<dbReference type="InterPro" id="IPR020568">
    <property type="entry name" value="Ribosomal_Su5_D2-typ_SF"/>
</dbReference>
<dbReference type="InterPro" id="IPR004463">
    <property type="entry name" value="UDP-acyl_GlcNac_deAcase"/>
</dbReference>
<dbReference type="InterPro" id="IPR011334">
    <property type="entry name" value="UDP-acyl_GlcNac_deAcase_C"/>
</dbReference>
<dbReference type="InterPro" id="IPR015870">
    <property type="entry name" value="UDP-acyl_N-AcGlcN_deAcase_N"/>
</dbReference>
<dbReference type="NCBIfam" id="TIGR00325">
    <property type="entry name" value="lpxC"/>
    <property type="match status" value="1"/>
</dbReference>
<dbReference type="PANTHER" id="PTHR33694">
    <property type="entry name" value="UDP-3-O-ACYL-N-ACETYLGLUCOSAMINE DEACETYLASE 1, MITOCHONDRIAL-RELATED"/>
    <property type="match status" value="1"/>
</dbReference>
<dbReference type="PANTHER" id="PTHR33694:SF1">
    <property type="entry name" value="UDP-3-O-ACYL-N-ACETYLGLUCOSAMINE DEACETYLASE 1, MITOCHONDRIAL-RELATED"/>
    <property type="match status" value="1"/>
</dbReference>
<dbReference type="Pfam" id="PF03331">
    <property type="entry name" value="LpxC"/>
    <property type="match status" value="1"/>
</dbReference>
<dbReference type="SUPFAM" id="SSF54211">
    <property type="entry name" value="Ribosomal protein S5 domain 2-like"/>
    <property type="match status" value="2"/>
</dbReference>
<comment type="function">
    <text evidence="1">Catalyzes the hydrolysis of UDP-3-O-myristoyl-N-acetylglucosamine to form UDP-3-O-myristoylglucosamine and acetate, the committed step in lipid A biosynthesis.</text>
</comment>
<comment type="catalytic activity">
    <reaction evidence="1">
        <text>a UDP-3-O-[(3R)-3-hydroxyacyl]-N-acetyl-alpha-D-glucosamine + H2O = a UDP-3-O-[(3R)-3-hydroxyacyl]-alpha-D-glucosamine + acetate</text>
        <dbReference type="Rhea" id="RHEA:67816"/>
        <dbReference type="ChEBI" id="CHEBI:15377"/>
        <dbReference type="ChEBI" id="CHEBI:30089"/>
        <dbReference type="ChEBI" id="CHEBI:137740"/>
        <dbReference type="ChEBI" id="CHEBI:173225"/>
        <dbReference type="EC" id="3.5.1.108"/>
    </reaction>
</comment>
<comment type="cofactor">
    <cofactor evidence="1">
        <name>Zn(2+)</name>
        <dbReference type="ChEBI" id="CHEBI:29105"/>
    </cofactor>
</comment>
<comment type="pathway">
    <text evidence="1">Glycolipid biosynthesis; lipid IV(A) biosynthesis; lipid IV(A) from (3R)-3-hydroxytetradecanoyl-[acyl-carrier-protein] and UDP-N-acetyl-alpha-D-glucosamine: step 2/6.</text>
</comment>
<comment type="similarity">
    <text evidence="1">Belongs to the LpxC family.</text>
</comment>
<accession>Q1BZF6</accession>